<sequence length="392" mass="43796">MTRPFNRVHLIVMDSVGIGEAPDAADFKDEGSHTLRHTLEGFDQTLPNLEKLGLGNIDKLPVVNAVEQPEAYYTKLSEASVGKDTMTGHWEIMGLNIMQPFKVYPNGFPEELIQQIEEMTGRKVVANKPASGTQIIDEWGEHQMKTGDLIVYTSADPVLQIAAHEDIIPLEELYDICEKVRELTKDPKYLIGRIIARPYVGEPGNFTRTSNRHDYALKPFGKTVLDHLKDGGYDVIAIGKINDIYDGEGVTEAVRTKSNMDGMDQLMKIVKKDFTGISFLNLVDFDALYGHRRDKPGYAQAIKDFDDRLPELFSNLKEDDLVIITADHGNDPTAPGTDHTREYIPVIMYSPKFKGGHALESDTTFSSIGATIADNFNVTLPEFGKSYLKELK</sequence>
<reference key="1">
    <citation type="journal article" date="2008" name="J. Bacteriol.">
        <title>Genome sequence of Staphylococcus aureus strain Newman and comparative analysis of staphylococcal genomes: polymorphism and evolution of two major pathogenicity islands.</title>
        <authorList>
            <person name="Baba T."/>
            <person name="Bae T."/>
            <person name="Schneewind O."/>
            <person name="Takeuchi F."/>
            <person name="Hiramatsu K."/>
        </authorList>
    </citation>
    <scope>NUCLEOTIDE SEQUENCE [LARGE SCALE GENOMIC DNA]</scope>
    <source>
        <strain>Newman</strain>
    </source>
</reference>
<accession>A6QDC3</accession>
<feature type="chain" id="PRO_1000072811" description="Phosphopentomutase">
    <location>
        <begin position="1"/>
        <end position="392"/>
    </location>
</feature>
<feature type="binding site" evidence="1">
    <location>
        <position position="14"/>
    </location>
    <ligand>
        <name>Mn(2+)</name>
        <dbReference type="ChEBI" id="CHEBI:29035"/>
        <label>1</label>
    </ligand>
</feature>
<feature type="binding site" evidence="1">
    <location>
        <position position="286"/>
    </location>
    <ligand>
        <name>Mn(2+)</name>
        <dbReference type="ChEBI" id="CHEBI:29035"/>
        <label>2</label>
    </ligand>
</feature>
<feature type="binding site" evidence="1">
    <location>
        <position position="291"/>
    </location>
    <ligand>
        <name>Mn(2+)</name>
        <dbReference type="ChEBI" id="CHEBI:29035"/>
        <label>2</label>
    </ligand>
</feature>
<feature type="binding site" evidence="1">
    <location>
        <position position="327"/>
    </location>
    <ligand>
        <name>Mn(2+)</name>
        <dbReference type="ChEBI" id="CHEBI:29035"/>
        <label>1</label>
    </ligand>
</feature>
<feature type="binding site" evidence="1">
    <location>
        <position position="328"/>
    </location>
    <ligand>
        <name>Mn(2+)</name>
        <dbReference type="ChEBI" id="CHEBI:29035"/>
        <label>1</label>
    </ligand>
</feature>
<feature type="binding site" evidence="1">
    <location>
        <position position="339"/>
    </location>
    <ligand>
        <name>Mn(2+)</name>
        <dbReference type="ChEBI" id="CHEBI:29035"/>
        <label>2</label>
    </ligand>
</feature>
<dbReference type="EC" id="5.4.2.7" evidence="1"/>
<dbReference type="EMBL" id="AP009351">
    <property type="protein sequence ID" value="BAF66355.1"/>
    <property type="molecule type" value="Genomic_DNA"/>
</dbReference>
<dbReference type="RefSeq" id="WP_000197806.1">
    <property type="nucleotide sequence ID" value="NZ_JBBIAE010000022.1"/>
</dbReference>
<dbReference type="SMR" id="A6QDC3"/>
<dbReference type="KEGG" id="sae:NWMN_0083"/>
<dbReference type="HOGENOM" id="CLU_053861_0_0_9"/>
<dbReference type="UniPathway" id="UPA00002">
    <property type="reaction ID" value="UER00467"/>
</dbReference>
<dbReference type="Proteomes" id="UP000006386">
    <property type="component" value="Chromosome"/>
</dbReference>
<dbReference type="GO" id="GO:0005829">
    <property type="term" value="C:cytosol"/>
    <property type="evidence" value="ECO:0007669"/>
    <property type="project" value="TreeGrafter"/>
</dbReference>
<dbReference type="GO" id="GO:0000287">
    <property type="term" value="F:magnesium ion binding"/>
    <property type="evidence" value="ECO:0007669"/>
    <property type="project" value="InterPro"/>
</dbReference>
<dbReference type="GO" id="GO:0030145">
    <property type="term" value="F:manganese ion binding"/>
    <property type="evidence" value="ECO:0007669"/>
    <property type="project" value="UniProtKB-UniRule"/>
</dbReference>
<dbReference type="GO" id="GO:0008973">
    <property type="term" value="F:phosphopentomutase activity"/>
    <property type="evidence" value="ECO:0007669"/>
    <property type="project" value="UniProtKB-UniRule"/>
</dbReference>
<dbReference type="GO" id="GO:0006018">
    <property type="term" value="P:2-deoxyribose 1-phosphate catabolic process"/>
    <property type="evidence" value="ECO:0007669"/>
    <property type="project" value="UniProtKB-UniRule"/>
</dbReference>
<dbReference type="GO" id="GO:0006015">
    <property type="term" value="P:5-phosphoribose 1-diphosphate biosynthetic process"/>
    <property type="evidence" value="ECO:0007669"/>
    <property type="project" value="UniProtKB-UniPathway"/>
</dbReference>
<dbReference type="GO" id="GO:0043094">
    <property type="term" value="P:metabolic compound salvage"/>
    <property type="evidence" value="ECO:0007669"/>
    <property type="project" value="InterPro"/>
</dbReference>
<dbReference type="GO" id="GO:0009117">
    <property type="term" value="P:nucleotide metabolic process"/>
    <property type="evidence" value="ECO:0007669"/>
    <property type="project" value="InterPro"/>
</dbReference>
<dbReference type="CDD" id="cd16009">
    <property type="entry name" value="PPM"/>
    <property type="match status" value="1"/>
</dbReference>
<dbReference type="FunFam" id="3.30.70.1250:FF:000001">
    <property type="entry name" value="Phosphopentomutase"/>
    <property type="match status" value="1"/>
</dbReference>
<dbReference type="Gene3D" id="3.40.720.10">
    <property type="entry name" value="Alkaline Phosphatase, subunit A"/>
    <property type="match status" value="1"/>
</dbReference>
<dbReference type="Gene3D" id="3.30.70.1250">
    <property type="entry name" value="Phosphopentomutase"/>
    <property type="match status" value="1"/>
</dbReference>
<dbReference type="HAMAP" id="MF_00740">
    <property type="entry name" value="Phosphopentomut"/>
    <property type="match status" value="1"/>
</dbReference>
<dbReference type="InterPro" id="IPR017850">
    <property type="entry name" value="Alkaline_phosphatase_core_sf"/>
</dbReference>
<dbReference type="InterPro" id="IPR010045">
    <property type="entry name" value="DeoB"/>
</dbReference>
<dbReference type="InterPro" id="IPR006124">
    <property type="entry name" value="Metalloenzyme"/>
</dbReference>
<dbReference type="InterPro" id="IPR024052">
    <property type="entry name" value="Phosphopentomutase_DeoB_cap_sf"/>
</dbReference>
<dbReference type="NCBIfam" id="TIGR01696">
    <property type="entry name" value="deoB"/>
    <property type="match status" value="1"/>
</dbReference>
<dbReference type="NCBIfam" id="NF003766">
    <property type="entry name" value="PRK05362.1"/>
    <property type="match status" value="1"/>
</dbReference>
<dbReference type="PANTHER" id="PTHR21110">
    <property type="entry name" value="PHOSPHOPENTOMUTASE"/>
    <property type="match status" value="1"/>
</dbReference>
<dbReference type="PANTHER" id="PTHR21110:SF0">
    <property type="entry name" value="PHOSPHOPENTOMUTASE"/>
    <property type="match status" value="1"/>
</dbReference>
<dbReference type="Pfam" id="PF01676">
    <property type="entry name" value="Metalloenzyme"/>
    <property type="match status" value="1"/>
</dbReference>
<dbReference type="PIRSF" id="PIRSF001491">
    <property type="entry name" value="Ppentomutase"/>
    <property type="match status" value="1"/>
</dbReference>
<dbReference type="SUPFAM" id="SSF53649">
    <property type="entry name" value="Alkaline phosphatase-like"/>
    <property type="match status" value="1"/>
</dbReference>
<dbReference type="SUPFAM" id="SSF143856">
    <property type="entry name" value="DeoB insert domain-like"/>
    <property type="match status" value="1"/>
</dbReference>
<gene>
    <name evidence="1" type="primary">deoB</name>
    <name type="ordered locus">NWMN_0083</name>
</gene>
<proteinExistence type="inferred from homology"/>
<organism>
    <name type="scientific">Staphylococcus aureus (strain Newman)</name>
    <dbReference type="NCBI Taxonomy" id="426430"/>
    <lineage>
        <taxon>Bacteria</taxon>
        <taxon>Bacillati</taxon>
        <taxon>Bacillota</taxon>
        <taxon>Bacilli</taxon>
        <taxon>Bacillales</taxon>
        <taxon>Staphylococcaceae</taxon>
        <taxon>Staphylococcus</taxon>
    </lineage>
</organism>
<evidence type="ECO:0000255" key="1">
    <source>
        <dbReference type="HAMAP-Rule" id="MF_00740"/>
    </source>
</evidence>
<name>DEOB_STAAE</name>
<comment type="function">
    <text evidence="1">Isomerase that catalyzes the conversion of deoxy-ribose 1-phosphate (dRib-1-P) and ribose 1-phosphate (Rib-1-P) to deoxy-ribose 5-phosphate (dRib-5-P) and ribose 5-phosphate (Rib-5-P), respectively.</text>
</comment>
<comment type="catalytic activity">
    <reaction evidence="1">
        <text>2-deoxy-alpha-D-ribose 1-phosphate = 2-deoxy-D-ribose 5-phosphate</text>
        <dbReference type="Rhea" id="RHEA:27658"/>
        <dbReference type="ChEBI" id="CHEBI:57259"/>
        <dbReference type="ChEBI" id="CHEBI:62877"/>
        <dbReference type="EC" id="5.4.2.7"/>
    </reaction>
</comment>
<comment type="catalytic activity">
    <reaction evidence="1">
        <text>alpha-D-ribose 1-phosphate = D-ribose 5-phosphate</text>
        <dbReference type="Rhea" id="RHEA:18793"/>
        <dbReference type="ChEBI" id="CHEBI:57720"/>
        <dbReference type="ChEBI" id="CHEBI:78346"/>
        <dbReference type="EC" id="5.4.2.7"/>
    </reaction>
</comment>
<comment type="cofactor">
    <cofactor evidence="1">
        <name>Mn(2+)</name>
        <dbReference type="ChEBI" id="CHEBI:29035"/>
    </cofactor>
    <text evidence="1">Binds 2 manganese ions.</text>
</comment>
<comment type="pathway">
    <text evidence="1">Carbohydrate degradation; 2-deoxy-D-ribose 1-phosphate degradation; D-glyceraldehyde 3-phosphate and acetaldehyde from 2-deoxy-alpha-D-ribose 1-phosphate: step 1/2.</text>
</comment>
<comment type="subcellular location">
    <subcellularLocation>
        <location evidence="1">Cytoplasm</location>
    </subcellularLocation>
</comment>
<comment type="similarity">
    <text evidence="1">Belongs to the phosphopentomutase family.</text>
</comment>
<protein>
    <recommendedName>
        <fullName evidence="1">Phosphopentomutase</fullName>
        <ecNumber evidence="1">5.4.2.7</ecNumber>
    </recommendedName>
    <alternativeName>
        <fullName evidence="1">Phosphodeoxyribomutase</fullName>
    </alternativeName>
</protein>
<keyword id="KW-0963">Cytoplasm</keyword>
<keyword id="KW-0413">Isomerase</keyword>
<keyword id="KW-0464">Manganese</keyword>
<keyword id="KW-0479">Metal-binding</keyword>